<comment type="function">
    <text evidence="1">General inhibitor of pancreatic serine proteases: inhibits chymotrypsin, trypsin, elastases, factor X, kallikrein as well as a variety of other proteases.</text>
</comment>
<comment type="subunit">
    <text evidence="1">Homodimer.</text>
</comment>
<comment type="subcellular location">
    <subcellularLocation>
        <location evidence="1">Periplasm</location>
    </subcellularLocation>
</comment>
<comment type="similarity">
    <text evidence="1">Belongs to the protease inhibitor I11 (ecotin) family.</text>
</comment>
<evidence type="ECO:0000255" key="1">
    <source>
        <dbReference type="HAMAP-Rule" id="MF_00706"/>
    </source>
</evidence>
<name>ECOT_SHIFL</name>
<reference key="1">
    <citation type="journal article" date="2002" name="Nucleic Acids Res.">
        <title>Genome sequence of Shigella flexneri 2a: insights into pathogenicity through comparison with genomes of Escherichia coli K12 and O157.</title>
        <authorList>
            <person name="Jin Q."/>
            <person name="Yuan Z."/>
            <person name="Xu J."/>
            <person name="Wang Y."/>
            <person name="Shen Y."/>
            <person name="Lu W."/>
            <person name="Wang J."/>
            <person name="Liu H."/>
            <person name="Yang J."/>
            <person name="Yang F."/>
            <person name="Zhang X."/>
            <person name="Zhang J."/>
            <person name="Yang G."/>
            <person name="Wu H."/>
            <person name="Qu D."/>
            <person name="Dong J."/>
            <person name="Sun L."/>
            <person name="Xue Y."/>
            <person name="Zhao A."/>
            <person name="Gao Y."/>
            <person name="Zhu J."/>
            <person name="Kan B."/>
            <person name="Ding K."/>
            <person name="Chen S."/>
            <person name="Cheng H."/>
            <person name="Yao Z."/>
            <person name="He B."/>
            <person name="Chen R."/>
            <person name="Ma D."/>
            <person name="Qiang B."/>
            <person name="Wen Y."/>
            <person name="Hou Y."/>
            <person name="Yu J."/>
        </authorList>
    </citation>
    <scope>NUCLEOTIDE SEQUENCE [LARGE SCALE GENOMIC DNA]</scope>
    <source>
        <strain>301 / Serotype 2a</strain>
    </source>
</reference>
<reference key="2">
    <citation type="journal article" date="2003" name="Infect. Immun.">
        <title>Complete genome sequence and comparative genomics of Shigella flexneri serotype 2a strain 2457T.</title>
        <authorList>
            <person name="Wei J."/>
            <person name="Goldberg M.B."/>
            <person name="Burland V."/>
            <person name="Venkatesan M.M."/>
            <person name="Deng W."/>
            <person name="Fournier G."/>
            <person name="Mayhew G.F."/>
            <person name="Plunkett G. III"/>
            <person name="Rose D.J."/>
            <person name="Darling A."/>
            <person name="Mau B."/>
            <person name="Perna N.T."/>
            <person name="Payne S.M."/>
            <person name="Runyen-Janecky L.J."/>
            <person name="Zhou S."/>
            <person name="Schwartz D.C."/>
            <person name="Blattner F.R."/>
        </authorList>
    </citation>
    <scope>NUCLEOTIDE SEQUENCE [LARGE SCALE GENOMIC DNA]</scope>
    <source>
        <strain>ATCC 700930 / 2457T / Serotype 2a</strain>
    </source>
</reference>
<organism>
    <name type="scientific">Shigella flexneri</name>
    <dbReference type="NCBI Taxonomy" id="623"/>
    <lineage>
        <taxon>Bacteria</taxon>
        <taxon>Pseudomonadati</taxon>
        <taxon>Pseudomonadota</taxon>
        <taxon>Gammaproteobacteria</taxon>
        <taxon>Enterobacterales</taxon>
        <taxon>Enterobacteriaceae</taxon>
        <taxon>Shigella</taxon>
    </lineage>
</organism>
<accession>Q821B1</accession>
<gene>
    <name evidence="1" type="primary">eco</name>
    <name type="ordered locus">SF2293</name>
    <name type="ordered locus">S2423</name>
</gene>
<sequence length="162" mass="18226">MKTILPEVLFAAFATTSAWAAESVQPLEKIAPYPQAETGMKRQVIQLTPQEDESTLKVELLIGQTLEVDCNLHRLGGKLESKTLEGWGYDYYVFDKVSSPVSTMMACPDGKKEKKFVTAYLGDAGMLRYNSKLPIVVYTPDNVDVKYRVWKAEEKIDNAEVR</sequence>
<dbReference type="EMBL" id="AE005674">
    <property type="protein sequence ID" value="AAN43812.2"/>
    <property type="molecule type" value="Genomic_DNA"/>
</dbReference>
<dbReference type="EMBL" id="AE014073">
    <property type="protein sequence ID" value="AAP17629.1"/>
    <property type="molecule type" value="Genomic_DNA"/>
</dbReference>
<dbReference type="RefSeq" id="NP_708105.2">
    <property type="nucleotide sequence ID" value="NC_004337.2"/>
</dbReference>
<dbReference type="RefSeq" id="WP_005046814.1">
    <property type="nucleotide sequence ID" value="NZ_CP151344.1"/>
</dbReference>
<dbReference type="SMR" id="Q821B1"/>
<dbReference type="STRING" id="198214.SF2293"/>
<dbReference type="MEROPS" id="I11.001"/>
<dbReference type="PaxDb" id="198214-SF2293"/>
<dbReference type="GeneID" id="1025479"/>
<dbReference type="KEGG" id="sfl:SF2293"/>
<dbReference type="KEGG" id="sfx:S2423"/>
<dbReference type="PATRIC" id="fig|198214.7.peg.2744"/>
<dbReference type="HOGENOM" id="CLU_111565_0_0_6"/>
<dbReference type="Proteomes" id="UP000001006">
    <property type="component" value="Chromosome"/>
</dbReference>
<dbReference type="Proteomes" id="UP000002673">
    <property type="component" value="Chromosome"/>
</dbReference>
<dbReference type="GO" id="GO:0042597">
    <property type="term" value="C:periplasmic space"/>
    <property type="evidence" value="ECO:0007669"/>
    <property type="project" value="UniProtKB-SubCell"/>
</dbReference>
<dbReference type="GO" id="GO:0004867">
    <property type="term" value="F:serine-type endopeptidase inhibitor activity"/>
    <property type="evidence" value="ECO:0007669"/>
    <property type="project" value="UniProtKB-UniRule"/>
</dbReference>
<dbReference type="CDD" id="cd00242">
    <property type="entry name" value="Ecotin"/>
    <property type="match status" value="1"/>
</dbReference>
<dbReference type="FunFam" id="2.60.40.550:FF:000001">
    <property type="entry name" value="Ecotin"/>
    <property type="match status" value="1"/>
</dbReference>
<dbReference type="FunFam" id="4.10.1230.10:FF:000001">
    <property type="entry name" value="Ecotin"/>
    <property type="match status" value="1"/>
</dbReference>
<dbReference type="Gene3D" id="2.60.40.550">
    <property type="entry name" value="Ecotin"/>
    <property type="match status" value="1"/>
</dbReference>
<dbReference type="Gene3D" id="4.10.1230.10">
    <property type="entry name" value="Ecotin, trypsin inhibitor"/>
    <property type="match status" value="1"/>
</dbReference>
<dbReference type="HAMAP" id="MF_00706">
    <property type="entry name" value="Ecotin"/>
    <property type="match status" value="1"/>
</dbReference>
<dbReference type="InterPro" id="IPR027438">
    <property type="entry name" value="Ecotin_C"/>
</dbReference>
<dbReference type="InterPro" id="IPR036198">
    <property type="entry name" value="Ecotin_sf"/>
</dbReference>
<dbReference type="InterPro" id="IPR005658">
    <property type="entry name" value="Prot_inh_ecotin"/>
</dbReference>
<dbReference type="InterPro" id="IPR023084">
    <property type="entry name" value="Prot_inh_ecotin_gammaproteobac"/>
</dbReference>
<dbReference type="NCBIfam" id="NF002987">
    <property type="entry name" value="PRK03719.1"/>
    <property type="match status" value="1"/>
</dbReference>
<dbReference type="PANTHER" id="PTHR35890">
    <property type="match status" value="1"/>
</dbReference>
<dbReference type="PANTHER" id="PTHR35890:SF3">
    <property type="entry name" value="ECOTIN"/>
    <property type="match status" value="1"/>
</dbReference>
<dbReference type="Pfam" id="PF03974">
    <property type="entry name" value="Ecotin"/>
    <property type="match status" value="1"/>
</dbReference>
<dbReference type="PIRSF" id="PIRSF006865">
    <property type="entry name" value="Prot_inh_ecotin"/>
    <property type="match status" value="1"/>
</dbReference>
<dbReference type="SUPFAM" id="SSF49772">
    <property type="entry name" value="Ecotin, trypsin inhibitor"/>
    <property type="match status" value="1"/>
</dbReference>
<keyword id="KW-1015">Disulfide bond</keyword>
<keyword id="KW-0574">Periplasm</keyword>
<keyword id="KW-0646">Protease inhibitor</keyword>
<keyword id="KW-1185">Reference proteome</keyword>
<keyword id="KW-0722">Serine protease inhibitor</keyword>
<keyword id="KW-0732">Signal</keyword>
<feature type="signal peptide" evidence="1">
    <location>
        <begin position="1"/>
        <end position="20"/>
    </location>
</feature>
<feature type="chain" id="PRO_0000007433" description="Ecotin">
    <location>
        <begin position="21"/>
        <end position="162"/>
    </location>
</feature>
<feature type="site" description="Reactive bond" evidence="1">
    <location>
        <begin position="104"/>
        <end position="105"/>
    </location>
</feature>
<feature type="disulfide bond" evidence="1">
    <location>
        <begin position="70"/>
        <end position="107"/>
    </location>
</feature>
<protein>
    <recommendedName>
        <fullName evidence="1">Ecotin</fullName>
    </recommendedName>
</protein>
<proteinExistence type="inferred from homology"/>